<accession>B0R5I4</accession>
<comment type="function">
    <text evidence="1">Catalyzes the synthesis of gamma-glutamylcysteine (gamma-GC), the main low-molecular-weight thiol compound instead of glutathione in halophilic archaea.</text>
</comment>
<comment type="catalytic activity">
    <reaction evidence="1">
        <text>L-cysteine + L-glutamate + ATP = gamma-L-glutamyl-L-cysteine + ADP + phosphate + H(+)</text>
        <dbReference type="Rhea" id="RHEA:13285"/>
        <dbReference type="ChEBI" id="CHEBI:15378"/>
        <dbReference type="ChEBI" id="CHEBI:29985"/>
        <dbReference type="ChEBI" id="CHEBI:30616"/>
        <dbReference type="ChEBI" id="CHEBI:35235"/>
        <dbReference type="ChEBI" id="CHEBI:43474"/>
        <dbReference type="ChEBI" id="CHEBI:58173"/>
        <dbReference type="ChEBI" id="CHEBI:456216"/>
        <dbReference type="EC" id="6.3.2.2"/>
    </reaction>
</comment>
<comment type="similarity">
    <text evidence="1">Belongs to the glutamate--cysteine ligase type 2 family. YbdK subfamily.</text>
</comment>
<evidence type="ECO:0000255" key="1">
    <source>
        <dbReference type="HAMAP-Rule" id="MF_01609"/>
    </source>
</evidence>
<organism>
    <name type="scientific">Halobacterium salinarum (strain ATCC 29341 / DSM 671 / R1)</name>
    <dbReference type="NCBI Taxonomy" id="478009"/>
    <lineage>
        <taxon>Archaea</taxon>
        <taxon>Methanobacteriati</taxon>
        <taxon>Methanobacteriota</taxon>
        <taxon>Stenosarchaea group</taxon>
        <taxon>Halobacteria</taxon>
        <taxon>Halobacteriales</taxon>
        <taxon>Halobacteriaceae</taxon>
        <taxon>Halobacterium</taxon>
        <taxon>Halobacterium salinarum NRC-34001</taxon>
    </lineage>
</organism>
<sequence length="360" mass="40019">MDVGSPEAFSESGTLGVEEEFFVVDEHGVPTAGSDELVYEGEPPEPIAGRLDHELFKFVVETQTPTLNGVAEAPAAIREVRAALVAYASEHGLRIAGAGLHPGARWREHEHAEKPRYRSQLDRIQYPQHRNTTAGLHIHVGVDDPDKAVWVSNRMRWHMPVLLALSANSPYWNGFDTGLASARAKIFEGLPNTGLPTAFESYAAFQAFERRMVEHGGIEDRGELWYDVRPHSGHGTVEVRAPDAQADPAVVDAFVEYAHALVTEYAQRYDDHPDPFSVTGLRRELLDANKWRAMRDGHDASFVARETQGAVDLGTVVDRECDRLGVSGIRDVYDDVSGAQQQRRILDTHGEKRLYNHLSL</sequence>
<gene>
    <name evidence="1" type="primary">gshA</name>
    <name type="ordered locus">OE_2998R</name>
</gene>
<name>GCS2_HALS3</name>
<keyword id="KW-0067">ATP-binding</keyword>
<keyword id="KW-0436">Ligase</keyword>
<keyword id="KW-0547">Nucleotide-binding</keyword>
<dbReference type="EC" id="6.3.2.2" evidence="1"/>
<dbReference type="EMBL" id="AM774415">
    <property type="protein sequence ID" value="CAP14001.1"/>
    <property type="molecule type" value="Genomic_DNA"/>
</dbReference>
<dbReference type="RefSeq" id="WP_010903015.1">
    <property type="nucleotide sequence ID" value="NC_010364.1"/>
</dbReference>
<dbReference type="SMR" id="B0R5I4"/>
<dbReference type="EnsemblBacteria" id="CAP14001">
    <property type="protein sequence ID" value="CAP14001"/>
    <property type="gene ID" value="OE_2998R"/>
</dbReference>
<dbReference type="KEGG" id="hsl:OE_2998R"/>
<dbReference type="HOGENOM" id="CLU_044848_1_0_2"/>
<dbReference type="PhylomeDB" id="B0R5I4"/>
<dbReference type="Proteomes" id="UP000001321">
    <property type="component" value="Chromosome"/>
</dbReference>
<dbReference type="GO" id="GO:0005524">
    <property type="term" value="F:ATP binding"/>
    <property type="evidence" value="ECO:0007669"/>
    <property type="project" value="UniProtKB-KW"/>
</dbReference>
<dbReference type="GO" id="GO:0004357">
    <property type="term" value="F:glutamate-cysteine ligase activity"/>
    <property type="evidence" value="ECO:0007669"/>
    <property type="project" value="UniProtKB-UniRule"/>
</dbReference>
<dbReference type="GO" id="GO:0042398">
    <property type="term" value="P:modified amino acid biosynthetic process"/>
    <property type="evidence" value="ECO:0007669"/>
    <property type="project" value="InterPro"/>
</dbReference>
<dbReference type="Gene3D" id="3.30.590.20">
    <property type="match status" value="1"/>
</dbReference>
<dbReference type="HAMAP" id="MF_01609">
    <property type="entry name" value="Glu_cys_ligase_2"/>
    <property type="match status" value="1"/>
</dbReference>
<dbReference type="InterPro" id="IPR050141">
    <property type="entry name" value="GCL_type2/YbdK_subfam"/>
</dbReference>
<dbReference type="InterPro" id="IPR006336">
    <property type="entry name" value="GCS2"/>
</dbReference>
<dbReference type="InterPro" id="IPR014746">
    <property type="entry name" value="Gln_synth/guanido_kin_cat_dom"/>
</dbReference>
<dbReference type="InterPro" id="IPR011793">
    <property type="entry name" value="YbdK"/>
</dbReference>
<dbReference type="NCBIfam" id="TIGR02050">
    <property type="entry name" value="gshA_cyan_rel"/>
    <property type="match status" value="1"/>
</dbReference>
<dbReference type="NCBIfam" id="NF010045">
    <property type="entry name" value="PRK13518.1"/>
    <property type="match status" value="1"/>
</dbReference>
<dbReference type="PANTHER" id="PTHR36510">
    <property type="entry name" value="GLUTAMATE--CYSTEINE LIGASE 2-RELATED"/>
    <property type="match status" value="1"/>
</dbReference>
<dbReference type="PANTHER" id="PTHR36510:SF1">
    <property type="entry name" value="GLUTAMATE--CYSTEINE LIGASE 2-RELATED"/>
    <property type="match status" value="1"/>
</dbReference>
<dbReference type="Pfam" id="PF04107">
    <property type="entry name" value="GCS2"/>
    <property type="match status" value="1"/>
</dbReference>
<dbReference type="SUPFAM" id="SSF55931">
    <property type="entry name" value="Glutamine synthetase/guanido kinase"/>
    <property type="match status" value="1"/>
</dbReference>
<reference key="1">
    <citation type="journal article" date="2008" name="Genomics">
        <title>Evolution in the laboratory: the genome of Halobacterium salinarum strain R1 compared to that of strain NRC-1.</title>
        <authorList>
            <person name="Pfeiffer F."/>
            <person name="Schuster S.C."/>
            <person name="Broicher A."/>
            <person name="Falb M."/>
            <person name="Palm P."/>
            <person name="Rodewald K."/>
            <person name="Ruepp A."/>
            <person name="Soppa J."/>
            <person name="Tittor J."/>
            <person name="Oesterhelt D."/>
        </authorList>
    </citation>
    <scope>NUCLEOTIDE SEQUENCE [LARGE SCALE GENOMIC DNA]</scope>
    <source>
        <strain>ATCC 29341 / DSM 671 / R1</strain>
    </source>
</reference>
<proteinExistence type="inferred from homology"/>
<feature type="chain" id="PRO_1000148221" description="Glutamate--cysteine ligase">
    <location>
        <begin position="1"/>
        <end position="360"/>
    </location>
</feature>
<protein>
    <recommendedName>
        <fullName evidence="1">Glutamate--cysteine ligase</fullName>
        <ecNumber evidence="1">6.3.2.2</ecNumber>
    </recommendedName>
    <alternativeName>
        <fullName evidence="1">Gamma-glutamylcysteine synthetase</fullName>
        <shortName evidence="1">GCS</shortName>
        <shortName evidence="1">Gamma-GCS</shortName>
    </alternativeName>
</protein>